<comment type="similarity">
    <text evidence="1">Belongs to the bacterial ribosomal protein bL28 family.</text>
</comment>
<proteinExistence type="inferred from homology"/>
<accession>Q2JMK8</accession>
<sequence>MARRCQLTNKKRNNAFAISHSHRRTKRLQEVNLQWKRIWWEEGKRFVRLRLSTKALKTLKAKGIGAMAREAGIDLNQF</sequence>
<evidence type="ECO:0000255" key="1">
    <source>
        <dbReference type="HAMAP-Rule" id="MF_00373"/>
    </source>
</evidence>
<evidence type="ECO:0000305" key="2"/>
<protein>
    <recommendedName>
        <fullName evidence="1">Large ribosomal subunit protein bL28</fullName>
    </recommendedName>
    <alternativeName>
        <fullName evidence="2">50S ribosomal protein L28</fullName>
    </alternativeName>
</protein>
<gene>
    <name evidence="1" type="primary">rpmB</name>
    <name evidence="1" type="synonym">rpl28</name>
    <name type="ordered locus">CYB_1051</name>
</gene>
<feature type="chain" id="PRO_1000007384" description="Large ribosomal subunit protein bL28">
    <location>
        <begin position="1"/>
        <end position="78"/>
    </location>
</feature>
<reference key="1">
    <citation type="journal article" date="2007" name="ISME J.">
        <title>Population level functional diversity in a microbial community revealed by comparative genomic and metagenomic analyses.</title>
        <authorList>
            <person name="Bhaya D."/>
            <person name="Grossman A.R."/>
            <person name="Steunou A.-S."/>
            <person name="Khuri N."/>
            <person name="Cohan F.M."/>
            <person name="Hamamura N."/>
            <person name="Melendrez M.C."/>
            <person name="Bateson M.M."/>
            <person name="Ward D.M."/>
            <person name="Heidelberg J.F."/>
        </authorList>
    </citation>
    <scope>NUCLEOTIDE SEQUENCE [LARGE SCALE GENOMIC DNA]</scope>
    <source>
        <strain>JA-2-3B'a(2-13)</strain>
    </source>
</reference>
<name>RL28_SYNJB</name>
<organism>
    <name type="scientific">Synechococcus sp. (strain JA-2-3B'a(2-13))</name>
    <name type="common">Cyanobacteria bacterium Yellowstone B-Prime</name>
    <dbReference type="NCBI Taxonomy" id="321332"/>
    <lineage>
        <taxon>Bacteria</taxon>
        <taxon>Bacillati</taxon>
        <taxon>Cyanobacteriota</taxon>
        <taxon>Cyanophyceae</taxon>
        <taxon>Synechococcales</taxon>
        <taxon>Synechococcaceae</taxon>
        <taxon>Synechococcus</taxon>
    </lineage>
</organism>
<dbReference type="EMBL" id="CP000240">
    <property type="protein sequence ID" value="ABD02029.1"/>
    <property type="molecule type" value="Genomic_DNA"/>
</dbReference>
<dbReference type="RefSeq" id="WP_011431026.1">
    <property type="nucleotide sequence ID" value="NC_007776.1"/>
</dbReference>
<dbReference type="SMR" id="Q2JMK8"/>
<dbReference type="STRING" id="321332.CYB_1051"/>
<dbReference type="KEGG" id="cyb:CYB_1051"/>
<dbReference type="eggNOG" id="COG0227">
    <property type="taxonomic scope" value="Bacteria"/>
</dbReference>
<dbReference type="HOGENOM" id="CLU_064548_3_0_3"/>
<dbReference type="OrthoDB" id="9805609at2"/>
<dbReference type="Proteomes" id="UP000001938">
    <property type="component" value="Chromosome"/>
</dbReference>
<dbReference type="GO" id="GO:1990904">
    <property type="term" value="C:ribonucleoprotein complex"/>
    <property type="evidence" value="ECO:0007669"/>
    <property type="project" value="UniProtKB-KW"/>
</dbReference>
<dbReference type="GO" id="GO:0005840">
    <property type="term" value="C:ribosome"/>
    <property type="evidence" value="ECO:0007669"/>
    <property type="project" value="UniProtKB-KW"/>
</dbReference>
<dbReference type="GO" id="GO:0003735">
    <property type="term" value="F:structural constituent of ribosome"/>
    <property type="evidence" value="ECO:0007669"/>
    <property type="project" value="InterPro"/>
</dbReference>
<dbReference type="GO" id="GO:0006412">
    <property type="term" value="P:translation"/>
    <property type="evidence" value="ECO:0007669"/>
    <property type="project" value="UniProtKB-UniRule"/>
</dbReference>
<dbReference type="Gene3D" id="2.30.170.40">
    <property type="entry name" value="Ribosomal protein L28/L24"/>
    <property type="match status" value="1"/>
</dbReference>
<dbReference type="HAMAP" id="MF_00373">
    <property type="entry name" value="Ribosomal_bL28"/>
    <property type="match status" value="1"/>
</dbReference>
<dbReference type="InterPro" id="IPR026569">
    <property type="entry name" value="Ribosomal_bL28"/>
</dbReference>
<dbReference type="InterPro" id="IPR034704">
    <property type="entry name" value="Ribosomal_bL28/bL31-like_sf"/>
</dbReference>
<dbReference type="InterPro" id="IPR001383">
    <property type="entry name" value="Ribosomal_bL28_bact-type"/>
</dbReference>
<dbReference type="InterPro" id="IPR037147">
    <property type="entry name" value="Ribosomal_bL28_sf"/>
</dbReference>
<dbReference type="NCBIfam" id="TIGR00009">
    <property type="entry name" value="L28"/>
    <property type="match status" value="1"/>
</dbReference>
<dbReference type="PANTHER" id="PTHR13528">
    <property type="entry name" value="39S RIBOSOMAL PROTEIN L28, MITOCHONDRIAL"/>
    <property type="match status" value="1"/>
</dbReference>
<dbReference type="PANTHER" id="PTHR13528:SF2">
    <property type="entry name" value="LARGE RIBOSOMAL SUBUNIT PROTEIN BL28M"/>
    <property type="match status" value="1"/>
</dbReference>
<dbReference type="Pfam" id="PF00830">
    <property type="entry name" value="Ribosomal_L28"/>
    <property type="match status" value="1"/>
</dbReference>
<dbReference type="SUPFAM" id="SSF143800">
    <property type="entry name" value="L28p-like"/>
    <property type="match status" value="1"/>
</dbReference>
<keyword id="KW-1185">Reference proteome</keyword>
<keyword id="KW-0687">Ribonucleoprotein</keyword>
<keyword id="KW-0689">Ribosomal protein</keyword>